<sequence length="258" mass="29395">MDQTSSSTQILVSLMENAQPDPTAGQPVAQVILDNFCLSSMYSPDVLRNPRAQHTIKTAVFQWIDEHHRKMYDCPIEPPLRFTDDAHLSADRCWHHLIGKLERVVSVLRAMRAMSRFEHNVFVFLPYCKRLRALVELFRHDYCCQSTVAGCARALDETIADAQRHLLVVRSMSERAAVMLVFSDWVRVYQCNICEDSSAEEQFLKPNVCCGYRVCNACYAKLWEFCTGAYPVCPICKTGFKSSSSNKRLQKADDPATL</sequence>
<keyword id="KW-0244">Early protein</keyword>
<keyword id="KW-0479">Metal-binding</keyword>
<keyword id="KW-1185">Reference proteome</keyword>
<keyword id="KW-0862">Zinc</keyword>
<keyword id="KW-0863">Zinc-finger</keyword>
<name>IE0_NPVLD</name>
<proteinExistence type="predicted"/>
<evidence type="ECO:0000255" key="1">
    <source>
        <dbReference type="PROSITE-ProRule" id="PRU00175"/>
    </source>
</evidence>
<protein>
    <recommendedName>
        <fullName>Immediate-early protein IE-0</fullName>
        <shortName>Immediate early 0 protein</shortName>
    </recommendedName>
    <alternativeName>
        <fullName>Immediate early transactivator 0</fullName>
    </alternativeName>
</protein>
<gene>
    <name type="primary">IE-0</name>
    <name type="ordered locus">LdOrf-21</name>
</gene>
<organism>
    <name type="scientific">Lymantria dispar multicapsid nuclear polyhedrosis virus</name>
    <name type="common">LdMNPV</name>
    <dbReference type="NCBI Taxonomy" id="10449"/>
    <lineage>
        <taxon>Viruses</taxon>
        <taxon>Viruses incertae sedis</taxon>
        <taxon>Naldaviricetes</taxon>
        <taxon>Lefavirales</taxon>
        <taxon>Baculoviridae</taxon>
        <taxon>Alphabaculovirus</taxon>
        <taxon>Alphabaculovirus lydisparis</taxon>
    </lineage>
</organism>
<accession>O36453</accession>
<accession>Q9YMV3</accession>
<organismHost>
    <name type="scientific">Lepidoptera</name>
    <name type="common">butterflies and moths</name>
    <dbReference type="NCBI Taxonomy" id="7088"/>
</organismHost>
<feature type="chain" id="PRO_0000056361" description="Immediate-early protein IE-0">
    <location>
        <begin position="1"/>
        <end position="258"/>
    </location>
</feature>
<feature type="zinc finger region" description="RING-type" evidence="1">
    <location>
        <begin position="191"/>
        <end position="237"/>
    </location>
</feature>
<reference key="1">
    <citation type="journal article" date="1997" name="Virology">
        <title>Splicing is required for transactivation by the immediate early gene 1 of the Lymantria dispar multinucleocapsid nuclear polyhedrosis virus.</title>
        <authorList>
            <person name="Pearson M.N."/>
            <person name="Rohrmann G.F."/>
        </authorList>
    </citation>
    <scope>NUCLEOTIDE SEQUENCE [GENOMIC DNA]</scope>
</reference>
<reference key="2">
    <citation type="journal article" date="1999" name="Virology">
        <title>Sequence and analysis of the genome of a baculovirus pathogenic for Lymantria dispar.</title>
        <authorList>
            <person name="Kuzio J."/>
            <person name="Pearson M.N."/>
            <person name="Harwood S.H."/>
            <person name="Funk C.J."/>
            <person name="Evans J.T."/>
            <person name="Slavicek J.M."/>
            <person name="Rohrmann G.F."/>
        </authorList>
    </citation>
    <scope>NUCLEOTIDE SEQUENCE [GENOMIC DNA]</scope>
</reference>
<dbReference type="EMBL" id="AF006656">
    <property type="protein sequence ID" value="AAC58234.1"/>
    <property type="molecule type" value="Genomic_DNA"/>
</dbReference>
<dbReference type="EMBL" id="AF081810">
    <property type="protein sequence ID" value="AAC70206.1"/>
    <property type="molecule type" value="Genomic_DNA"/>
</dbReference>
<dbReference type="PIR" id="T30368">
    <property type="entry name" value="T30368"/>
</dbReference>
<dbReference type="RefSeq" id="NP_047657.1">
    <property type="nucleotide sequence ID" value="NC_001973.1"/>
</dbReference>
<dbReference type="KEGG" id="vg:1488496"/>
<dbReference type="OrthoDB" id="14620at10239"/>
<dbReference type="Proteomes" id="UP000203997">
    <property type="component" value="Genome"/>
</dbReference>
<dbReference type="GO" id="GO:0008270">
    <property type="term" value="F:zinc ion binding"/>
    <property type="evidence" value="ECO:0007669"/>
    <property type="project" value="UniProtKB-KW"/>
</dbReference>
<dbReference type="InterPro" id="IPR007954">
    <property type="entry name" value="Baculo_IE-1"/>
</dbReference>
<dbReference type="InterPro" id="IPR001841">
    <property type="entry name" value="Znf_RING"/>
</dbReference>
<dbReference type="Pfam" id="PF05290">
    <property type="entry name" value="Baculo_IE-1"/>
    <property type="match status" value="1"/>
</dbReference>
<dbReference type="SUPFAM" id="SSF57850">
    <property type="entry name" value="RING/U-box"/>
    <property type="match status" value="1"/>
</dbReference>
<dbReference type="PROSITE" id="PS50089">
    <property type="entry name" value="ZF_RING_2"/>
    <property type="match status" value="1"/>
</dbReference>